<evidence type="ECO:0000255" key="1">
    <source>
        <dbReference type="HAMAP-Rule" id="MF_00693"/>
    </source>
</evidence>
<accession>B0REB7</accession>
<protein>
    <recommendedName>
        <fullName evidence="1">Probable transcriptional regulatory protein CMS0715</fullName>
    </recommendedName>
</protein>
<name>Y715_CLASE</name>
<gene>
    <name type="ordered locus">CMS0715</name>
</gene>
<proteinExistence type="inferred from homology"/>
<sequence length="255" mass="27404">MSGHSKWATTKHKKAIIDSRRAKSFAKLIKNIEVAAKIGGADMSGNPTLVDAVQKAKKTSVPNDNIDRAVKRGAGLLGEVVDYQTIMYEGYAANGVAMLVECLTDNKNRAAAEVRTAMSRNGGTMADPGSVAYNFHRKGVIAVPHADAPTEDDVLAAVLDAGAEDVTDHGEVFEIRCEPSDMVGVRQALQEAGIDYDSADVEFVPQVKVEVDLETARKVNKLVDAMEDLDDVQNIYVNSDVPADVQAALDDDDEE</sequence>
<keyword id="KW-0963">Cytoplasm</keyword>
<keyword id="KW-0238">DNA-binding</keyword>
<keyword id="KW-0804">Transcription</keyword>
<keyword id="KW-0805">Transcription regulation</keyword>
<organism>
    <name type="scientific">Clavibacter sepedonicus</name>
    <name type="common">Clavibacter michiganensis subsp. sepedonicus</name>
    <dbReference type="NCBI Taxonomy" id="31964"/>
    <lineage>
        <taxon>Bacteria</taxon>
        <taxon>Bacillati</taxon>
        <taxon>Actinomycetota</taxon>
        <taxon>Actinomycetes</taxon>
        <taxon>Micrococcales</taxon>
        <taxon>Microbacteriaceae</taxon>
        <taxon>Clavibacter</taxon>
    </lineage>
</organism>
<feature type="chain" id="PRO_1000083148" description="Probable transcriptional regulatory protein CMS0715">
    <location>
        <begin position="1"/>
        <end position="255"/>
    </location>
</feature>
<dbReference type="EMBL" id="AM849034">
    <property type="protein sequence ID" value="CAQ00835.1"/>
    <property type="molecule type" value="Genomic_DNA"/>
</dbReference>
<dbReference type="RefSeq" id="WP_012298144.1">
    <property type="nucleotide sequence ID" value="NZ_MZMN01000003.1"/>
</dbReference>
<dbReference type="SMR" id="B0REB7"/>
<dbReference type="STRING" id="31964.CMS0715"/>
<dbReference type="KEGG" id="cms:CMS0715"/>
<dbReference type="eggNOG" id="COG0217">
    <property type="taxonomic scope" value="Bacteria"/>
</dbReference>
<dbReference type="HOGENOM" id="CLU_062974_2_2_11"/>
<dbReference type="OrthoDB" id="9781053at2"/>
<dbReference type="Proteomes" id="UP000001318">
    <property type="component" value="Chromosome"/>
</dbReference>
<dbReference type="GO" id="GO:0005829">
    <property type="term" value="C:cytosol"/>
    <property type="evidence" value="ECO:0007669"/>
    <property type="project" value="TreeGrafter"/>
</dbReference>
<dbReference type="GO" id="GO:0003677">
    <property type="term" value="F:DNA binding"/>
    <property type="evidence" value="ECO:0007669"/>
    <property type="project" value="UniProtKB-UniRule"/>
</dbReference>
<dbReference type="GO" id="GO:0006355">
    <property type="term" value="P:regulation of DNA-templated transcription"/>
    <property type="evidence" value="ECO:0007669"/>
    <property type="project" value="UniProtKB-UniRule"/>
</dbReference>
<dbReference type="FunFam" id="1.10.10.200:FF:000002">
    <property type="entry name" value="Probable transcriptional regulatory protein CLM62_37755"/>
    <property type="match status" value="1"/>
</dbReference>
<dbReference type="Gene3D" id="1.10.10.200">
    <property type="match status" value="1"/>
</dbReference>
<dbReference type="Gene3D" id="3.30.70.980">
    <property type="match status" value="2"/>
</dbReference>
<dbReference type="HAMAP" id="MF_00693">
    <property type="entry name" value="Transcrip_reg_TACO1"/>
    <property type="match status" value="1"/>
</dbReference>
<dbReference type="InterPro" id="IPR017856">
    <property type="entry name" value="Integrase-like_N"/>
</dbReference>
<dbReference type="InterPro" id="IPR048300">
    <property type="entry name" value="TACO1_YebC-like_2nd/3rd_dom"/>
</dbReference>
<dbReference type="InterPro" id="IPR049083">
    <property type="entry name" value="TACO1_YebC_N"/>
</dbReference>
<dbReference type="InterPro" id="IPR002876">
    <property type="entry name" value="Transcrip_reg_TACO1-like"/>
</dbReference>
<dbReference type="InterPro" id="IPR026564">
    <property type="entry name" value="Transcrip_reg_TACO1-like_dom3"/>
</dbReference>
<dbReference type="InterPro" id="IPR029072">
    <property type="entry name" value="YebC-like"/>
</dbReference>
<dbReference type="NCBIfam" id="NF001030">
    <property type="entry name" value="PRK00110.1"/>
    <property type="match status" value="1"/>
</dbReference>
<dbReference type="NCBIfam" id="NF009044">
    <property type="entry name" value="PRK12378.1"/>
    <property type="match status" value="1"/>
</dbReference>
<dbReference type="NCBIfam" id="TIGR01033">
    <property type="entry name" value="YebC/PmpR family DNA-binding transcriptional regulator"/>
    <property type="match status" value="1"/>
</dbReference>
<dbReference type="PANTHER" id="PTHR12532:SF6">
    <property type="entry name" value="TRANSCRIPTIONAL REGULATORY PROTEIN YEBC-RELATED"/>
    <property type="match status" value="1"/>
</dbReference>
<dbReference type="PANTHER" id="PTHR12532">
    <property type="entry name" value="TRANSLATIONAL ACTIVATOR OF CYTOCHROME C OXIDASE 1"/>
    <property type="match status" value="1"/>
</dbReference>
<dbReference type="Pfam" id="PF20772">
    <property type="entry name" value="TACO1_YebC_N"/>
    <property type="match status" value="1"/>
</dbReference>
<dbReference type="Pfam" id="PF01709">
    <property type="entry name" value="Transcrip_reg"/>
    <property type="match status" value="1"/>
</dbReference>
<dbReference type="SUPFAM" id="SSF75625">
    <property type="entry name" value="YebC-like"/>
    <property type="match status" value="1"/>
</dbReference>
<comment type="subcellular location">
    <subcellularLocation>
        <location evidence="1">Cytoplasm</location>
    </subcellularLocation>
</comment>
<comment type="similarity">
    <text evidence="1">Belongs to the TACO1 family.</text>
</comment>
<reference key="1">
    <citation type="journal article" date="2008" name="J. Bacteriol.">
        <title>Genome of the actinomycete plant pathogen Clavibacter michiganensis subsp. sepedonicus suggests recent niche adaptation.</title>
        <authorList>
            <person name="Bentley S.D."/>
            <person name="Corton C."/>
            <person name="Brown S.E."/>
            <person name="Barron A."/>
            <person name="Clark L."/>
            <person name="Doggett J."/>
            <person name="Harris B."/>
            <person name="Ormond D."/>
            <person name="Quail M.A."/>
            <person name="May G."/>
            <person name="Francis D."/>
            <person name="Knudson D."/>
            <person name="Parkhill J."/>
            <person name="Ishimaru C.A."/>
        </authorList>
    </citation>
    <scope>NUCLEOTIDE SEQUENCE [LARGE SCALE GENOMIC DNA]</scope>
    <source>
        <strain>ATCC 33113 / DSM 20744 / JCM 9667 / LMG 2889 / ICMP 2535 / C-1</strain>
    </source>
</reference>